<sequence>MPLSVEQALANFSQRYVEAWKEKHDSLPINEELVGLASPCIDETRNLEVLWQPVARDESIRLVNIENGIELDLHDDFHAFYGAQFSADMTAKFEGMNVELLQIWSDEDLENLQGNMLGHLVMQRRLKLVPTLFIAVTDDEMEVISICNQSGEVILDTVGTKKRKVLAESMAEFLEKLEPVVA</sequence>
<name>SYDP_ALISL</name>
<feature type="chain" id="PRO_1000137022" description="Protein Syd">
    <location>
        <begin position="1"/>
        <end position="182"/>
    </location>
</feature>
<comment type="function">
    <text evidence="1">Interacts with the SecY protein in vivo. May bind preferentially to an uncomplexed state of SecY, thus functioning either as a chelating agent for excess SecY in the cell or as a regulatory factor that negatively controls the translocase function.</text>
</comment>
<comment type="subcellular location">
    <subcellularLocation>
        <location evidence="1">Cell inner membrane</location>
        <topology evidence="1">Peripheral membrane protein</topology>
        <orientation evidence="1">Cytoplasmic side</orientation>
    </subcellularLocation>
    <text evidence="1">Loosely associated with the cytoplasmic side of the inner membrane, probably via SecY.</text>
</comment>
<comment type="similarity">
    <text evidence="1">Belongs to the Syd family.</text>
</comment>
<accession>B6EGG8</accession>
<gene>
    <name evidence="1" type="primary">syd</name>
    <name type="ordered locus">VSAL_I0699</name>
</gene>
<reference key="1">
    <citation type="journal article" date="2008" name="BMC Genomics">
        <title>The genome sequence of the fish pathogen Aliivibrio salmonicida strain LFI1238 shows extensive evidence of gene decay.</title>
        <authorList>
            <person name="Hjerde E."/>
            <person name="Lorentzen M.S."/>
            <person name="Holden M.T."/>
            <person name="Seeger K."/>
            <person name="Paulsen S."/>
            <person name="Bason N."/>
            <person name="Churcher C."/>
            <person name="Harris D."/>
            <person name="Norbertczak H."/>
            <person name="Quail M.A."/>
            <person name="Sanders S."/>
            <person name="Thurston S."/>
            <person name="Parkhill J."/>
            <person name="Willassen N.P."/>
            <person name="Thomson N.R."/>
        </authorList>
    </citation>
    <scope>NUCLEOTIDE SEQUENCE [LARGE SCALE GENOMIC DNA]</scope>
    <source>
        <strain>LFI1238</strain>
    </source>
</reference>
<protein>
    <recommendedName>
        <fullName evidence="1">Protein Syd</fullName>
    </recommendedName>
</protein>
<evidence type="ECO:0000255" key="1">
    <source>
        <dbReference type="HAMAP-Rule" id="MF_01104"/>
    </source>
</evidence>
<organism>
    <name type="scientific">Aliivibrio salmonicida (strain LFI1238)</name>
    <name type="common">Vibrio salmonicida (strain LFI1238)</name>
    <dbReference type="NCBI Taxonomy" id="316275"/>
    <lineage>
        <taxon>Bacteria</taxon>
        <taxon>Pseudomonadati</taxon>
        <taxon>Pseudomonadota</taxon>
        <taxon>Gammaproteobacteria</taxon>
        <taxon>Vibrionales</taxon>
        <taxon>Vibrionaceae</taxon>
        <taxon>Aliivibrio</taxon>
    </lineage>
</organism>
<dbReference type="EMBL" id="FM178379">
    <property type="protein sequence ID" value="CAQ78384.1"/>
    <property type="molecule type" value="Genomic_DNA"/>
</dbReference>
<dbReference type="RefSeq" id="WP_012549504.1">
    <property type="nucleotide sequence ID" value="NC_011312.1"/>
</dbReference>
<dbReference type="SMR" id="B6EGG8"/>
<dbReference type="KEGG" id="vsa:VSAL_I0699"/>
<dbReference type="eggNOG" id="ENOG502ZCMR">
    <property type="taxonomic scope" value="Bacteria"/>
</dbReference>
<dbReference type="HOGENOM" id="CLU_121866_0_0_6"/>
<dbReference type="Proteomes" id="UP000001730">
    <property type="component" value="Chromosome 1"/>
</dbReference>
<dbReference type="GO" id="GO:0009898">
    <property type="term" value="C:cytoplasmic side of plasma membrane"/>
    <property type="evidence" value="ECO:0007669"/>
    <property type="project" value="InterPro"/>
</dbReference>
<dbReference type="CDD" id="cd16323">
    <property type="entry name" value="Syd"/>
    <property type="match status" value="1"/>
</dbReference>
<dbReference type="Gene3D" id="3.40.1580.20">
    <property type="entry name" value="Syd protein"/>
    <property type="match status" value="1"/>
</dbReference>
<dbReference type="HAMAP" id="MF_01104">
    <property type="entry name" value="Syd"/>
    <property type="match status" value="1"/>
</dbReference>
<dbReference type="InterPro" id="IPR009948">
    <property type="entry name" value="Syd"/>
</dbReference>
<dbReference type="InterPro" id="IPR038228">
    <property type="entry name" value="Syd_sf"/>
</dbReference>
<dbReference type="NCBIfam" id="NF003439">
    <property type="entry name" value="PRK04968.1"/>
    <property type="match status" value="1"/>
</dbReference>
<dbReference type="Pfam" id="PF07348">
    <property type="entry name" value="Syd"/>
    <property type="match status" value="1"/>
</dbReference>
<proteinExistence type="inferred from homology"/>
<keyword id="KW-0997">Cell inner membrane</keyword>
<keyword id="KW-1003">Cell membrane</keyword>
<keyword id="KW-0472">Membrane</keyword>